<keyword id="KW-0002">3D-structure</keyword>
<keyword id="KW-0010">Activator</keyword>
<keyword id="KW-0131">Cell cycle</keyword>
<keyword id="KW-0217">Developmental protein</keyword>
<keyword id="KW-0221">Differentiation</keyword>
<keyword id="KW-0238">DNA-binding</keyword>
<keyword id="KW-0479">Metal-binding</keyword>
<keyword id="KW-0539">Nucleus</keyword>
<keyword id="KW-1185">Reference proteome</keyword>
<keyword id="KW-0804">Transcription</keyword>
<keyword id="KW-0805">Transcription regulation</keyword>
<keyword id="KW-0862">Zinc</keyword>
<keyword id="KW-0863">Zinc-finger</keyword>
<organism>
    <name type="scientific">Drosophila melanogaster</name>
    <name type="common">Fruit fly</name>
    <dbReference type="NCBI Taxonomy" id="7227"/>
    <lineage>
        <taxon>Eukaryota</taxon>
        <taxon>Metazoa</taxon>
        <taxon>Ecdysozoa</taxon>
        <taxon>Arthropoda</taxon>
        <taxon>Hexapoda</taxon>
        <taxon>Insecta</taxon>
        <taxon>Pterygota</taxon>
        <taxon>Neoptera</taxon>
        <taxon>Endopterygota</taxon>
        <taxon>Diptera</taxon>
        <taxon>Brachycera</taxon>
        <taxon>Muscomorpha</taxon>
        <taxon>Ephydroidea</taxon>
        <taxon>Drosophilidae</taxon>
        <taxon>Drosophila</taxon>
        <taxon>Sophophora</taxon>
    </lineage>
</organism>
<reference key="1">
    <citation type="journal article" date="1992" name="Genes Dev.">
        <title>The scalloped gene encodes a novel, evolutionarily conserved transcription factor required for sensory organ differentiation in Drosophila.</title>
        <authorList>
            <person name="Campbell S.D."/>
            <person name="Inamdar M."/>
            <person name="Rodrigues V."/>
            <person name="Raghavan V."/>
            <person name="Palazzolo M."/>
            <person name="Chovnick A."/>
        </authorList>
    </citation>
    <scope>NUCLEOTIDE SEQUENCE [MRNA]</scope>
</reference>
<reference key="2">
    <citation type="journal article" date="2000" name="Science">
        <title>The genome sequence of Drosophila melanogaster.</title>
        <authorList>
            <person name="Adams M.D."/>
            <person name="Celniker S.E."/>
            <person name="Holt R.A."/>
            <person name="Evans C.A."/>
            <person name="Gocayne J.D."/>
            <person name="Amanatides P.G."/>
            <person name="Scherer S.E."/>
            <person name="Li P.W."/>
            <person name="Hoskins R.A."/>
            <person name="Galle R.F."/>
            <person name="George R.A."/>
            <person name="Lewis S.E."/>
            <person name="Richards S."/>
            <person name="Ashburner M."/>
            <person name="Henderson S.N."/>
            <person name="Sutton G.G."/>
            <person name="Wortman J.R."/>
            <person name="Yandell M.D."/>
            <person name="Zhang Q."/>
            <person name="Chen L.X."/>
            <person name="Brandon R.C."/>
            <person name="Rogers Y.-H.C."/>
            <person name="Blazej R.G."/>
            <person name="Champe M."/>
            <person name="Pfeiffer B.D."/>
            <person name="Wan K.H."/>
            <person name="Doyle C."/>
            <person name="Baxter E.G."/>
            <person name="Helt G."/>
            <person name="Nelson C.R."/>
            <person name="Miklos G.L.G."/>
            <person name="Abril J.F."/>
            <person name="Agbayani A."/>
            <person name="An H.-J."/>
            <person name="Andrews-Pfannkoch C."/>
            <person name="Baldwin D."/>
            <person name="Ballew R.M."/>
            <person name="Basu A."/>
            <person name="Baxendale J."/>
            <person name="Bayraktaroglu L."/>
            <person name="Beasley E.M."/>
            <person name="Beeson K.Y."/>
            <person name="Benos P.V."/>
            <person name="Berman B.P."/>
            <person name="Bhandari D."/>
            <person name="Bolshakov S."/>
            <person name="Borkova D."/>
            <person name="Botchan M.R."/>
            <person name="Bouck J."/>
            <person name="Brokstein P."/>
            <person name="Brottier P."/>
            <person name="Burtis K.C."/>
            <person name="Busam D.A."/>
            <person name="Butler H."/>
            <person name="Cadieu E."/>
            <person name="Center A."/>
            <person name="Chandra I."/>
            <person name="Cherry J.M."/>
            <person name="Cawley S."/>
            <person name="Dahlke C."/>
            <person name="Davenport L.B."/>
            <person name="Davies P."/>
            <person name="de Pablos B."/>
            <person name="Delcher A."/>
            <person name="Deng Z."/>
            <person name="Mays A.D."/>
            <person name="Dew I."/>
            <person name="Dietz S.M."/>
            <person name="Dodson K."/>
            <person name="Doup L.E."/>
            <person name="Downes M."/>
            <person name="Dugan-Rocha S."/>
            <person name="Dunkov B.C."/>
            <person name="Dunn P."/>
            <person name="Durbin K.J."/>
            <person name="Evangelista C.C."/>
            <person name="Ferraz C."/>
            <person name="Ferriera S."/>
            <person name="Fleischmann W."/>
            <person name="Fosler C."/>
            <person name="Gabrielian A.E."/>
            <person name="Garg N.S."/>
            <person name="Gelbart W.M."/>
            <person name="Glasser K."/>
            <person name="Glodek A."/>
            <person name="Gong F."/>
            <person name="Gorrell J.H."/>
            <person name="Gu Z."/>
            <person name="Guan P."/>
            <person name="Harris M."/>
            <person name="Harris N.L."/>
            <person name="Harvey D.A."/>
            <person name="Heiman T.J."/>
            <person name="Hernandez J.R."/>
            <person name="Houck J."/>
            <person name="Hostin D."/>
            <person name="Houston K.A."/>
            <person name="Howland T.J."/>
            <person name="Wei M.-H."/>
            <person name="Ibegwam C."/>
            <person name="Jalali M."/>
            <person name="Kalush F."/>
            <person name="Karpen G.H."/>
            <person name="Ke Z."/>
            <person name="Kennison J.A."/>
            <person name="Ketchum K.A."/>
            <person name="Kimmel B.E."/>
            <person name="Kodira C.D."/>
            <person name="Kraft C.L."/>
            <person name="Kravitz S."/>
            <person name="Kulp D."/>
            <person name="Lai Z."/>
            <person name="Lasko P."/>
            <person name="Lei Y."/>
            <person name="Levitsky A.A."/>
            <person name="Li J.H."/>
            <person name="Li Z."/>
            <person name="Liang Y."/>
            <person name="Lin X."/>
            <person name="Liu X."/>
            <person name="Mattei B."/>
            <person name="McIntosh T.C."/>
            <person name="McLeod M.P."/>
            <person name="McPherson D."/>
            <person name="Merkulov G."/>
            <person name="Milshina N.V."/>
            <person name="Mobarry C."/>
            <person name="Morris J."/>
            <person name="Moshrefi A."/>
            <person name="Mount S.M."/>
            <person name="Moy M."/>
            <person name="Murphy B."/>
            <person name="Murphy L."/>
            <person name="Muzny D.M."/>
            <person name="Nelson D.L."/>
            <person name="Nelson D.R."/>
            <person name="Nelson K.A."/>
            <person name="Nixon K."/>
            <person name="Nusskern D.R."/>
            <person name="Pacleb J.M."/>
            <person name="Palazzolo M."/>
            <person name="Pittman G.S."/>
            <person name="Pan S."/>
            <person name="Pollard J."/>
            <person name="Puri V."/>
            <person name="Reese M.G."/>
            <person name="Reinert K."/>
            <person name="Remington K."/>
            <person name="Saunders R.D.C."/>
            <person name="Scheeler F."/>
            <person name="Shen H."/>
            <person name="Shue B.C."/>
            <person name="Siden-Kiamos I."/>
            <person name="Simpson M."/>
            <person name="Skupski M.P."/>
            <person name="Smith T.J."/>
            <person name="Spier E."/>
            <person name="Spradling A.C."/>
            <person name="Stapleton M."/>
            <person name="Strong R."/>
            <person name="Sun E."/>
            <person name="Svirskas R."/>
            <person name="Tector C."/>
            <person name="Turner R."/>
            <person name="Venter E."/>
            <person name="Wang A.H."/>
            <person name="Wang X."/>
            <person name="Wang Z.-Y."/>
            <person name="Wassarman D.A."/>
            <person name="Weinstock G.M."/>
            <person name="Weissenbach J."/>
            <person name="Williams S.M."/>
            <person name="Woodage T."/>
            <person name="Worley K.C."/>
            <person name="Wu D."/>
            <person name="Yang S."/>
            <person name="Yao Q.A."/>
            <person name="Ye J."/>
            <person name="Yeh R.-F."/>
            <person name="Zaveri J.S."/>
            <person name="Zhan M."/>
            <person name="Zhang G."/>
            <person name="Zhao Q."/>
            <person name="Zheng L."/>
            <person name="Zheng X.H."/>
            <person name="Zhong F.N."/>
            <person name="Zhong W."/>
            <person name="Zhou X."/>
            <person name="Zhu S.C."/>
            <person name="Zhu X."/>
            <person name="Smith H.O."/>
            <person name="Gibbs R.A."/>
            <person name="Myers E.W."/>
            <person name="Rubin G.M."/>
            <person name="Venter J.C."/>
        </authorList>
    </citation>
    <scope>NUCLEOTIDE SEQUENCE [LARGE SCALE GENOMIC DNA]</scope>
    <source>
        <strain>Berkeley</strain>
    </source>
</reference>
<reference key="3">
    <citation type="journal article" date="2002" name="Genome Biol.">
        <title>Annotation of the Drosophila melanogaster euchromatic genome: a systematic review.</title>
        <authorList>
            <person name="Misra S."/>
            <person name="Crosby M.A."/>
            <person name="Mungall C.J."/>
            <person name="Matthews B.B."/>
            <person name="Campbell K.S."/>
            <person name="Hradecky P."/>
            <person name="Huang Y."/>
            <person name="Kaminker J.S."/>
            <person name="Millburn G.H."/>
            <person name="Prochnik S.E."/>
            <person name="Smith C.D."/>
            <person name="Tupy J.L."/>
            <person name="Whitfield E.J."/>
            <person name="Bayraktaroglu L."/>
            <person name="Berman B.P."/>
            <person name="Bettencourt B.R."/>
            <person name="Celniker S.E."/>
            <person name="de Grey A.D.N.J."/>
            <person name="Drysdale R.A."/>
            <person name="Harris N.L."/>
            <person name="Richter J."/>
            <person name="Russo S."/>
            <person name="Schroeder A.J."/>
            <person name="Shu S.Q."/>
            <person name="Stapleton M."/>
            <person name="Yamada C."/>
            <person name="Ashburner M."/>
            <person name="Gelbart W.M."/>
            <person name="Rubin G.M."/>
            <person name="Lewis S.E."/>
        </authorList>
    </citation>
    <scope>GENOME REANNOTATION</scope>
    <source>
        <strain>Berkeley</strain>
    </source>
</reference>
<reference key="4">
    <citation type="journal article" date="1998" name="Genes Dev.">
        <title>Molecular interactions between Vestigial and Scalloped promote wing formation in Drosophila.</title>
        <authorList>
            <person name="Simmonds A.J."/>
            <person name="Liu X."/>
            <person name="Soanes K.H."/>
            <person name="Krause H.M."/>
            <person name="Irvine K.D."/>
            <person name="Bell J.B."/>
        </authorList>
    </citation>
    <scope>FUNCTION</scope>
    <scope>INTERACTION WITH VG</scope>
</reference>
<reference key="5">
    <citation type="journal article" date="1998" name="Genes Dev.">
        <title>The Vestigial and Scalloped proteins act together to directly regulate wing-specific gene expression in Drosophila.</title>
        <authorList>
            <person name="Halder G."/>
            <person name="Polaczyk P."/>
            <person name="Kraus M.E."/>
            <person name="Hudson A."/>
            <person name="Kim J."/>
            <person name="Laughon A."/>
            <person name="Carroll S.B."/>
        </authorList>
    </citation>
    <scope>FUNCTION</scope>
    <scope>INTERACTION WITH VG</scope>
</reference>
<reference key="6">
    <citation type="journal article" date="2000" name="Dev. Biol.">
        <title>Roles for scalloped and vestigial in regulating cell affinity and interactions between the wing blade and the wing hinge.</title>
        <authorList>
            <person name="Liu X."/>
            <person name="Grammont M."/>
            <person name="Irvine K.D."/>
        </authorList>
    </citation>
    <scope>FUNCTION</scope>
    <scope>TISSUE SPECIFICITY</scope>
</reference>
<reference key="7">
    <citation type="journal article" date="2001" name="Development">
        <title>Binding of the vestigial co-factor switches the DNA-target selectivity of the scalloped selector protein.</title>
        <authorList>
            <person name="Halder G."/>
            <person name="Carroll S.B."/>
        </authorList>
    </citation>
    <scope>DNA-BINDING OF VG-SD COMPLEX</scope>
</reference>
<reference key="8">
    <citation type="journal article" date="2003" name="Mech. Dev.">
        <title>Further developmental roles of the vestigial/scalloped transcription complex during wing development in Drosophila melanogaster.</title>
        <authorList>
            <person name="Srivastava A."/>
            <person name="Bell J.B."/>
        </authorList>
    </citation>
    <scope>FUNCTION</scope>
    <scope>INTERACTION WITH VG</scope>
</reference>
<reference key="9">
    <citation type="journal article" date="2008" name="Curr. Biol.">
        <title>SCALLOPED interacts with YORKIE, the nuclear effector of the hippo tumor-suppressor pathway in Drosophila.</title>
        <authorList>
            <person name="Goulev Y."/>
            <person name="Fauny J.D."/>
            <person name="Gonzalez-Marti B."/>
            <person name="Flagiello D."/>
            <person name="Silber J."/>
            <person name="Zider A."/>
        </authorList>
    </citation>
    <scope>FUNCTION</scope>
    <scope>INTERACTION WITH YKI</scope>
</reference>
<reference key="10">
    <citation type="journal article" date="2008" name="Dev. Cell">
        <title>The TEAD/TEF family of transcription factor Scalloped mediates Hippo signaling in organ size control.</title>
        <authorList>
            <person name="Zhang L."/>
            <person name="Ren F."/>
            <person name="Zhang Q."/>
            <person name="Chen Y."/>
            <person name="Wang B."/>
            <person name="Jiang J."/>
        </authorList>
    </citation>
    <scope>FUNCTION</scope>
</reference>
<evidence type="ECO:0000255" key="1">
    <source>
        <dbReference type="PROSITE-ProRule" id="PRU00505"/>
    </source>
</evidence>
<evidence type="ECO:0000256" key="2">
    <source>
        <dbReference type="SAM" id="MobiDB-lite"/>
    </source>
</evidence>
<evidence type="ECO:0000269" key="3">
    <source>
    </source>
</evidence>
<evidence type="ECO:0000269" key="4">
    <source>
    </source>
</evidence>
<evidence type="ECO:0000269" key="5">
    <source>
    </source>
</evidence>
<evidence type="ECO:0000269" key="6">
    <source>
    </source>
</evidence>
<evidence type="ECO:0000269" key="7">
    <source>
    </source>
</evidence>
<evidence type="ECO:0000269" key="8">
    <source>
    </source>
</evidence>
<evidence type="ECO:0007829" key="9">
    <source>
        <dbReference type="PDB" id="6Y20"/>
    </source>
</evidence>
<evidence type="ECO:0007829" key="10">
    <source>
        <dbReference type="PDB" id="8A8Q"/>
    </source>
</evidence>
<proteinExistence type="evidence at protein level"/>
<dbReference type="EMBL" id="M83787">
    <property type="protein sequence ID" value="AAA28881.1"/>
    <property type="molecule type" value="mRNA"/>
</dbReference>
<dbReference type="EMBL" id="AE014298">
    <property type="protein sequence ID" value="AAF48521.1"/>
    <property type="molecule type" value="Genomic_DNA"/>
</dbReference>
<dbReference type="PIR" id="A42136">
    <property type="entry name" value="A42136"/>
</dbReference>
<dbReference type="RefSeq" id="NP_001096990.1">
    <property type="nucleotide sequence ID" value="NM_001103520.3"/>
</dbReference>
<dbReference type="RefSeq" id="NP_001096991.1">
    <property type="nucleotide sequence ID" value="NM_001103521.3"/>
</dbReference>
<dbReference type="RefSeq" id="NP_001096992.1">
    <property type="nucleotide sequence ID" value="NM_001103522.3"/>
</dbReference>
<dbReference type="RefSeq" id="NP_001245697.1">
    <property type="nucleotide sequence ID" value="NM_001258768.1"/>
</dbReference>
<dbReference type="RefSeq" id="NP_001259582.1">
    <property type="nucleotide sequence ID" value="NM_001272653.2"/>
</dbReference>
<dbReference type="RefSeq" id="NP_001259583.1">
    <property type="nucleotide sequence ID" value="NM_001272654.2"/>
</dbReference>
<dbReference type="RefSeq" id="NP_511169.1">
    <property type="nucleotide sequence ID" value="NM_078614.5"/>
</dbReference>
<dbReference type="PDB" id="6Y20">
    <property type="method" value="X-ray"/>
    <property type="resolution" value="1.85 A"/>
    <property type="chains" value="A/B=222-440"/>
</dbReference>
<dbReference type="PDB" id="8A8Q">
    <property type="method" value="X-ray"/>
    <property type="resolution" value="1.47 A"/>
    <property type="chains" value="A/B=222-440"/>
</dbReference>
<dbReference type="PDBsum" id="6Y20"/>
<dbReference type="PDBsum" id="8A8Q"/>
<dbReference type="SMR" id="P30052"/>
<dbReference type="BioGRID" id="58884">
    <property type="interactions" value="53"/>
</dbReference>
<dbReference type="DIP" id="DIP-21510N"/>
<dbReference type="FunCoup" id="P30052">
    <property type="interactions" value="366"/>
</dbReference>
<dbReference type="IntAct" id="P30052">
    <property type="interactions" value="3"/>
</dbReference>
<dbReference type="SwissPalm" id="P30052"/>
<dbReference type="DNASU" id="32536"/>
<dbReference type="EnsemblMetazoa" id="FBtr0074099">
    <property type="protein sequence ID" value="FBpp0073914"/>
    <property type="gene ID" value="FBgn0003345"/>
</dbReference>
<dbReference type="EnsemblMetazoa" id="FBtr0112825">
    <property type="protein sequence ID" value="FBpp0111737"/>
    <property type="gene ID" value="FBgn0003345"/>
</dbReference>
<dbReference type="EnsemblMetazoa" id="FBtr0112826">
    <property type="protein sequence ID" value="FBpp0111738"/>
    <property type="gene ID" value="FBgn0003345"/>
</dbReference>
<dbReference type="EnsemblMetazoa" id="FBtr0112827">
    <property type="protein sequence ID" value="FBpp0111739"/>
    <property type="gene ID" value="FBgn0003345"/>
</dbReference>
<dbReference type="EnsemblMetazoa" id="FBtr0308129">
    <property type="protein sequence ID" value="FBpp0300451"/>
    <property type="gene ID" value="FBgn0003345"/>
</dbReference>
<dbReference type="EnsemblMetazoa" id="FBtr0310312">
    <property type="protein sequence ID" value="FBpp0301995"/>
    <property type="gene ID" value="FBgn0003345"/>
</dbReference>
<dbReference type="EnsemblMetazoa" id="FBtr0310313">
    <property type="protein sequence ID" value="FBpp0301996"/>
    <property type="gene ID" value="FBgn0003345"/>
</dbReference>
<dbReference type="GeneID" id="32536"/>
<dbReference type="KEGG" id="dme:Dmel_CG8544"/>
<dbReference type="AGR" id="FB:FBgn0003345"/>
<dbReference type="CTD" id="32536"/>
<dbReference type="FlyBase" id="FBgn0003345">
    <property type="gene designation" value="sd"/>
</dbReference>
<dbReference type="VEuPathDB" id="VectorBase:FBgn0003345"/>
<dbReference type="eggNOG" id="KOG3841">
    <property type="taxonomic scope" value="Eukaryota"/>
</dbReference>
<dbReference type="GeneTree" id="ENSGT00950000182956"/>
<dbReference type="InParanoid" id="P30052"/>
<dbReference type="OrthoDB" id="10006572at2759"/>
<dbReference type="PhylomeDB" id="P30052"/>
<dbReference type="Reactome" id="R-DME-390193">
    <property type="pathway name" value="Transcriptional activation by YKI"/>
</dbReference>
<dbReference type="SignaLink" id="P30052"/>
<dbReference type="BioGRID-ORCS" id="32536">
    <property type="hits" value="0 hits in 3 CRISPR screens"/>
</dbReference>
<dbReference type="ChiTaRS" id="sd">
    <property type="organism name" value="fly"/>
</dbReference>
<dbReference type="GenomeRNAi" id="32536"/>
<dbReference type="PRO" id="PR:P30052"/>
<dbReference type="Proteomes" id="UP000000803">
    <property type="component" value="Chromosome X"/>
</dbReference>
<dbReference type="Bgee" id="FBgn0003345">
    <property type="expression patterns" value="Expressed in spermatocyte cyst cell (Drosophila) in testis and 313 other cell types or tissues"/>
</dbReference>
<dbReference type="ExpressionAtlas" id="P30052">
    <property type="expression patterns" value="baseline and differential"/>
</dbReference>
<dbReference type="GO" id="GO:0005654">
    <property type="term" value="C:nucleoplasm"/>
    <property type="evidence" value="ECO:0000304"/>
    <property type="project" value="Reactome"/>
</dbReference>
<dbReference type="GO" id="GO:0005634">
    <property type="term" value="C:nucleus"/>
    <property type="evidence" value="ECO:0000314"/>
    <property type="project" value="UniProtKB"/>
</dbReference>
<dbReference type="GO" id="GO:0090575">
    <property type="term" value="C:RNA polymerase II transcription regulator complex"/>
    <property type="evidence" value="ECO:0000353"/>
    <property type="project" value="FlyBase"/>
</dbReference>
<dbReference type="GO" id="GO:0005667">
    <property type="term" value="C:transcription regulator complex"/>
    <property type="evidence" value="ECO:0000318"/>
    <property type="project" value="GO_Central"/>
</dbReference>
<dbReference type="GO" id="GO:0000981">
    <property type="term" value="F:DNA-binding transcription factor activity, RNA polymerase II-specific"/>
    <property type="evidence" value="ECO:0000314"/>
    <property type="project" value="FlyBase"/>
</dbReference>
<dbReference type="GO" id="GO:0019904">
    <property type="term" value="F:protein domain specific binding"/>
    <property type="evidence" value="ECO:0000353"/>
    <property type="project" value="UniProtKB"/>
</dbReference>
<dbReference type="GO" id="GO:0000978">
    <property type="term" value="F:RNA polymerase II cis-regulatory region sequence-specific DNA binding"/>
    <property type="evidence" value="ECO:0000314"/>
    <property type="project" value="FlyBase"/>
</dbReference>
<dbReference type="GO" id="GO:0000976">
    <property type="term" value="F:transcription cis-regulatory region binding"/>
    <property type="evidence" value="ECO:0000314"/>
    <property type="project" value="FlyBase"/>
</dbReference>
<dbReference type="GO" id="GO:0001223">
    <property type="term" value="F:transcription coactivator binding"/>
    <property type="evidence" value="ECO:0000353"/>
    <property type="project" value="FlyBase"/>
</dbReference>
<dbReference type="GO" id="GO:0001222">
    <property type="term" value="F:transcription corepressor binding"/>
    <property type="evidence" value="ECO:0000353"/>
    <property type="project" value="FlyBase"/>
</dbReference>
<dbReference type="GO" id="GO:0008270">
    <property type="term" value="F:zinc ion binding"/>
    <property type="evidence" value="ECO:0007669"/>
    <property type="project" value="UniProtKB-KW"/>
</dbReference>
<dbReference type="GO" id="GO:0055013">
    <property type="term" value="P:cardiac muscle cell development"/>
    <property type="evidence" value="ECO:0000315"/>
    <property type="project" value="FlyBase"/>
</dbReference>
<dbReference type="GO" id="GO:0001745">
    <property type="term" value="P:compound eye morphogenesis"/>
    <property type="evidence" value="ECO:0000315"/>
    <property type="project" value="FlyBase"/>
</dbReference>
<dbReference type="GO" id="GO:0048568">
    <property type="term" value="P:embryonic organ development"/>
    <property type="evidence" value="ECO:0000318"/>
    <property type="project" value="GO_Central"/>
</dbReference>
<dbReference type="GO" id="GO:0035329">
    <property type="term" value="P:hippo signaling"/>
    <property type="evidence" value="ECO:0000318"/>
    <property type="project" value="GO_Central"/>
</dbReference>
<dbReference type="GO" id="GO:0007480">
    <property type="term" value="P:imaginal disc-derived leg morphogenesis"/>
    <property type="evidence" value="ECO:0000315"/>
    <property type="project" value="FlyBase"/>
</dbReference>
<dbReference type="GO" id="GO:0007476">
    <property type="term" value="P:imaginal disc-derived wing morphogenesis"/>
    <property type="evidence" value="ECO:0000314"/>
    <property type="project" value="UniProtKB"/>
</dbReference>
<dbReference type="GO" id="GO:0045892">
    <property type="term" value="P:negative regulation of DNA-templated transcription"/>
    <property type="evidence" value="ECO:0000316"/>
    <property type="project" value="FlyBase"/>
</dbReference>
<dbReference type="GO" id="GO:0007406">
    <property type="term" value="P:negative regulation of neuroblast proliferation"/>
    <property type="evidence" value="ECO:0000314"/>
    <property type="project" value="FlyBase"/>
</dbReference>
<dbReference type="GO" id="GO:0045944">
    <property type="term" value="P:positive regulation of transcription by RNA polymerase II"/>
    <property type="evidence" value="ECO:0000314"/>
    <property type="project" value="FlyBase"/>
</dbReference>
<dbReference type="GO" id="GO:2000826">
    <property type="term" value="P:regulation of heart morphogenesis"/>
    <property type="evidence" value="ECO:0000316"/>
    <property type="project" value="FlyBase"/>
</dbReference>
<dbReference type="GO" id="GO:0006357">
    <property type="term" value="P:regulation of transcription by RNA polymerase II"/>
    <property type="evidence" value="ECO:0000318"/>
    <property type="project" value="GO_Central"/>
</dbReference>
<dbReference type="GO" id="GO:0007423">
    <property type="term" value="P:sensory organ development"/>
    <property type="evidence" value="ECO:0000315"/>
    <property type="project" value="FlyBase"/>
</dbReference>
<dbReference type="GO" id="GO:0007525">
    <property type="term" value="P:somatic muscle development"/>
    <property type="evidence" value="ECO:0000315"/>
    <property type="project" value="FlyBase"/>
</dbReference>
<dbReference type="GO" id="GO:0072089">
    <property type="term" value="P:stem cell proliferation"/>
    <property type="evidence" value="ECO:0000314"/>
    <property type="project" value="FlyBase"/>
</dbReference>
<dbReference type="GO" id="GO:0035220">
    <property type="term" value="P:wing disc development"/>
    <property type="evidence" value="ECO:0000315"/>
    <property type="project" value="FlyBase"/>
</dbReference>
<dbReference type="FunFam" id="2.70.50.80:FF:000003">
    <property type="entry name" value="Scalloped, isoform D"/>
    <property type="match status" value="1"/>
</dbReference>
<dbReference type="Gene3D" id="2.70.50.80">
    <property type="match status" value="1"/>
</dbReference>
<dbReference type="Gene3D" id="6.10.20.40">
    <property type="entry name" value="TEA/ATTS domain"/>
    <property type="match status" value="1"/>
</dbReference>
<dbReference type="InterPro" id="IPR000818">
    <property type="entry name" value="TEA/ATTS_dom"/>
</dbReference>
<dbReference type="InterPro" id="IPR038096">
    <property type="entry name" value="TEA/ATTS_sf"/>
</dbReference>
<dbReference type="InterPro" id="IPR050937">
    <property type="entry name" value="TEC1_TEAD_TF"/>
</dbReference>
<dbReference type="InterPro" id="IPR016361">
    <property type="entry name" value="TEF_metazoa"/>
</dbReference>
<dbReference type="InterPro" id="IPR041086">
    <property type="entry name" value="YBD"/>
</dbReference>
<dbReference type="PANTHER" id="PTHR11834:SF0">
    <property type="entry name" value="PROTEIN SCALLOPED"/>
    <property type="match status" value="1"/>
</dbReference>
<dbReference type="PANTHER" id="PTHR11834">
    <property type="entry name" value="TRANSCRIPTIONAL ENHANCER FACTOR TEF RELATED"/>
    <property type="match status" value="1"/>
</dbReference>
<dbReference type="Pfam" id="PF01285">
    <property type="entry name" value="TEA"/>
    <property type="match status" value="1"/>
</dbReference>
<dbReference type="Pfam" id="PF17725">
    <property type="entry name" value="YBD"/>
    <property type="match status" value="1"/>
</dbReference>
<dbReference type="PIRSF" id="PIRSF002603">
    <property type="entry name" value="TEF"/>
    <property type="match status" value="1"/>
</dbReference>
<dbReference type="PRINTS" id="PR00065">
    <property type="entry name" value="TEADOMAIN"/>
</dbReference>
<dbReference type="SMART" id="SM00426">
    <property type="entry name" value="TEA"/>
    <property type="match status" value="1"/>
</dbReference>
<dbReference type="PROSITE" id="PS00554">
    <property type="entry name" value="TEA_1"/>
    <property type="match status" value="1"/>
</dbReference>
<dbReference type="PROSITE" id="PS51088">
    <property type="entry name" value="TEA_2"/>
    <property type="match status" value="1"/>
</dbReference>
<gene>
    <name type="primary">sd</name>
    <name type="ORF">CG8544</name>
</gene>
<feature type="chain" id="PRO_0000205942" description="Protein scalloped">
    <location>
        <begin position="1"/>
        <end position="440"/>
    </location>
</feature>
<feature type="DNA-binding region" description="TEA" evidence="1">
    <location>
        <begin position="86"/>
        <end position="162"/>
    </location>
</feature>
<feature type="region of interest" description="Disordered" evidence="2">
    <location>
        <begin position="32"/>
        <end position="65"/>
    </location>
</feature>
<feature type="strand" evidence="9">
    <location>
        <begin position="224"/>
        <end position="226"/>
    </location>
</feature>
<feature type="strand" evidence="10">
    <location>
        <begin position="228"/>
        <end position="243"/>
    </location>
</feature>
<feature type="strand" evidence="10">
    <location>
        <begin position="246"/>
        <end position="255"/>
    </location>
</feature>
<feature type="strand" evidence="10">
    <location>
        <begin position="267"/>
        <end position="270"/>
    </location>
</feature>
<feature type="helix" evidence="10">
    <location>
        <begin position="271"/>
        <end position="273"/>
    </location>
</feature>
<feature type="helix" evidence="10">
    <location>
        <begin position="275"/>
        <end position="277"/>
    </location>
</feature>
<feature type="helix" evidence="10">
    <location>
        <begin position="285"/>
        <end position="291"/>
    </location>
</feature>
<feature type="helix" evidence="10">
    <location>
        <begin position="294"/>
        <end position="296"/>
    </location>
</feature>
<feature type="strand" evidence="10">
    <location>
        <begin position="297"/>
        <end position="304"/>
    </location>
</feature>
<feature type="strand" evidence="10">
    <location>
        <begin position="319"/>
        <end position="330"/>
    </location>
</feature>
<feature type="strand" evidence="10">
    <location>
        <begin position="334"/>
        <end position="342"/>
    </location>
</feature>
<feature type="strand" evidence="10">
    <location>
        <begin position="345"/>
        <end position="349"/>
    </location>
</feature>
<feature type="strand" evidence="10">
    <location>
        <begin position="352"/>
        <end position="354"/>
    </location>
</feature>
<feature type="strand" evidence="10">
    <location>
        <begin position="357"/>
        <end position="359"/>
    </location>
</feature>
<feature type="strand" evidence="10">
    <location>
        <begin position="362"/>
        <end position="371"/>
    </location>
</feature>
<feature type="helix" evidence="10">
    <location>
        <begin position="374"/>
        <end position="384"/>
    </location>
</feature>
<feature type="helix" evidence="10">
    <location>
        <begin position="389"/>
        <end position="396"/>
    </location>
</feature>
<feature type="strand" evidence="10">
    <location>
        <begin position="399"/>
        <end position="407"/>
    </location>
</feature>
<feature type="turn" evidence="10">
    <location>
        <begin position="408"/>
        <end position="410"/>
    </location>
</feature>
<feature type="strand" evidence="10">
    <location>
        <begin position="413"/>
        <end position="423"/>
    </location>
</feature>
<feature type="strand" evidence="10">
    <location>
        <begin position="431"/>
        <end position="438"/>
    </location>
</feature>
<comment type="function">
    <text evidence="3 4 5 6 7 8">Transcription factor which plays a key role in the Hippo/SWH (Sav/Wts/Hpo) signaling pathway, a signaling pathway that plays a pivotal role in organ size control and tumor suppression by restricting proliferation and promoting apoptosis. The core of this pathway is composed of a kinase cascade wherein Hippo (Hpo), in complex with its regulatory protein Salvador (Sav), phosphorylates and activates Warts (Wts) in complex with its regulatory protein Mats, which in turn phosphorylates and inactivates the Yorkie (Yki) oncoprotein. The Hippo/SWH signaling pathway inhibits the activity of the transcriptional complex formed by Scalloped (sd) and Yki and the target genes of this pathway include cyclin-E (cycE), diap1 and bantam. Sd promotes nuclear localization of Yki. Involved in the regulation of cell-specific gene expression during development, particularly in the differentiation of the nervous system. When in combination with vestigial (vg) it acts as a transcriptional activation complex that regulates gene expression in the wing. Binding to vg switches the DNA target selectivity of sd. Required autonomously for cell proliferation and viability within the wing blade. Required for proper sensory organ precursor (SOP) differentiation at the wing margin; required for correct expression of sens.</text>
</comment>
<comment type="subunit">
    <text evidence="4 6 7 8">The C-terminus of sd interacts with the C-terminal serine-rich protein domain of vg, to form a complex which acts as a selector for wing development. Interacts (via C-terminus) with yki (via N-terminus) and this interaction enhances its transcriptional activity.</text>
</comment>
<comment type="interaction">
    <interactant intactId="EBI-151228">
        <id>P30052</id>
    </interactant>
    <interactant intactId="EBI-162687">
        <id>Q26366</id>
        <label>vg</label>
    </interactant>
    <organismsDiffer>false</organismsDiffer>
    <experiments>7</experiments>
</comment>
<comment type="subcellular location">
    <subcellularLocation>
        <location>Nucleus</location>
    </subcellularLocation>
</comment>
<comment type="tissue specificity">
    <text evidence="3">Subset of neuroblasts in the central nervous system and in the peripheral sense organs of the embryo. Expressed in the developing wing primordia initially along the D/V wing boundary, and by the late third larval instar, maximal expression is seen in cells at the D/V wing disk boundary. Less expression in cells located farther from this boundary. Also expressed in wing progenitor cells.</text>
</comment>
<sequence length="440" mass="49658">MKNITSSSTCSTGLLQLQNNLSCSELEVAEKTEQQAVGPGTIPSPWTPVNAGPPGALGSADTNGSMVDSKNLDVGDMSDDEKDLSSADAEGVWSPDIEQSFQEALSIYPPCGRRKIILSDEGKMYGRNELIARYIKLRTGKTRTRKQVSSHIQVLARRKLREIQAKIKVQFWQPGLQPSTSQDFYDYSIKPFPQPPYPAGKTSTAVSGDETGIPPSQLPWEGRAIATHKFRLLEFTAFMEIQRDEIYHRHLFVQLGGKPSFSDPLLETVDIRQIFDKFPEKSGGLKDLYEKGPQNAFYLVKCWADLNTDLTTGSETGDFYGVTSQYESNENVVLVCSTIVCSFGKQVVEKVESEYSRLENNRYVYRIQRSPMCEYMINFIQKLKNLPERYMMNSVLENFTILQVMRARETQETLLCIAYVFEVAAQNSGTTHHIYRLIKE</sequence>
<name>SCAL_DROME</name>
<protein>
    <recommendedName>
        <fullName>Protein scalloped</fullName>
    </recommendedName>
</protein>
<accession>P30052</accession>
<accession>Q9VXN7</accession>